<proteinExistence type="inferred from homology"/>
<feature type="chain" id="PRO_0000160287" description="Protein PsiE homolog">
    <location>
        <begin position="1"/>
        <end position="139"/>
    </location>
</feature>
<feature type="transmembrane region" description="Helical" evidence="1">
    <location>
        <begin position="20"/>
        <end position="40"/>
    </location>
</feature>
<feature type="transmembrane region" description="Helical" evidence="1">
    <location>
        <begin position="60"/>
        <end position="80"/>
    </location>
</feature>
<feature type="transmembrane region" description="Helical" evidence="1">
    <location>
        <begin position="85"/>
        <end position="105"/>
    </location>
</feature>
<feature type="transmembrane region" description="Helical" evidence="1">
    <location>
        <begin position="111"/>
        <end position="131"/>
    </location>
</feature>
<sequence>MEESLELEKLPRIITDVLKIVLCTALIALAIVLIIALVKITYTLSMMVLNTSSVVPYDVAEQAVMFFLYFGFIGLIVQYFKSGYHFPLRYFIYAGITAMLRLIIVNHESSVDTILFAGAILIMVIALCLVLYSNKLKNI</sequence>
<keyword id="KW-0997">Cell inner membrane</keyword>
<keyword id="KW-1003">Cell membrane</keyword>
<keyword id="KW-0472">Membrane</keyword>
<keyword id="KW-0812">Transmembrane</keyword>
<keyword id="KW-1133">Transmembrane helix</keyword>
<accession>Q4QMJ5</accession>
<comment type="subcellular location">
    <subcellularLocation>
        <location evidence="1">Cell inner membrane</location>
        <topology evidence="1">Multi-pass membrane protein</topology>
    </subcellularLocation>
</comment>
<comment type="similarity">
    <text evidence="1">Belongs to the PsiE family.</text>
</comment>
<organism>
    <name type="scientific">Haemophilus influenzae (strain 86-028NP)</name>
    <dbReference type="NCBI Taxonomy" id="281310"/>
    <lineage>
        <taxon>Bacteria</taxon>
        <taxon>Pseudomonadati</taxon>
        <taxon>Pseudomonadota</taxon>
        <taxon>Gammaproteobacteria</taxon>
        <taxon>Pasteurellales</taxon>
        <taxon>Pasteurellaceae</taxon>
        <taxon>Haemophilus</taxon>
    </lineage>
</organism>
<protein>
    <recommendedName>
        <fullName evidence="1">Protein PsiE homolog</fullName>
    </recommendedName>
</protein>
<gene>
    <name evidence="1" type="primary">psiE</name>
    <name type="ordered locus">NTHI0856</name>
</gene>
<reference key="1">
    <citation type="journal article" date="2005" name="J. Bacteriol.">
        <title>Genomic sequence of an otitis media isolate of nontypeable Haemophilus influenzae: comparative study with H. influenzae serotype d, strain KW20.</title>
        <authorList>
            <person name="Harrison A."/>
            <person name="Dyer D.W."/>
            <person name="Gillaspy A."/>
            <person name="Ray W.C."/>
            <person name="Mungur R."/>
            <person name="Carson M.B."/>
            <person name="Zhong H."/>
            <person name="Gipson J."/>
            <person name="Gipson M."/>
            <person name="Johnson L.S."/>
            <person name="Lewis L."/>
            <person name="Bakaletz L.O."/>
            <person name="Munson R.S. Jr."/>
        </authorList>
    </citation>
    <scope>NUCLEOTIDE SEQUENCE [LARGE SCALE GENOMIC DNA]</scope>
    <source>
        <strain>86-028NP</strain>
    </source>
</reference>
<evidence type="ECO:0000255" key="1">
    <source>
        <dbReference type="HAMAP-Rule" id="MF_01048"/>
    </source>
</evidence>
<name>PSIE_HAEI8</name>
<dbReference type="EMBL" id="CP000057">
    <property type="protein sequence ID" value="AAX87752.1"/>
    <property type="molecule type" value="Genomic_DNA"/>
</dbReference>
<dbReference type="RefSeq" id="WP_005661523.1">
    <property type="nucleotide sequence ID" value="NC_007146.2"/>
</dbReference>
<dbReference type="SMR" id="Q4QMJ5"/>
<dbReference type="GeneID" id="93219732"/>
<dbReference type="KEGG" id="hit:NTHI0856"/>
<dbReference type="HOGENOM" id="CLU_127561_0_0_6"/>
<dbReference type="Proteomes" id="UP000002525">
    <property type="component" value="Chromosome"/>
</dbReference>
<dbReference type="GO" id="GO:0005886">
    <property type="term" value="C:plasma membrane"/>
    <property type="evidence" value="ECO:0007669"/>
    <property type="project" value="UniProtKB-SubCell"/>
</dbReference>
<dbReference type="GO" id="GO:0016036">
    <property type="term" value="P:cellular response to phosphate starvation"/>
    <property type="evidence" value="ECO:0007669"/>
    <property type="project" value="InterPro"/>
</dbReference>
<dbReference type="HAMAP" id="MF_01048">
    <property type="entry name" value="PsiE"/>
    <property type="match status" value="1"/>
</dbReference>
<dbReference type="InterPro" id="IPR009315">
    <property type="entry name" value="P_starv_induced_PsiE"/>
</dbReference>
<dbReference type="InterPro" id="IPR020948">
    <property type="entry name" value="P_starv_induced_PsiE-like"/>
</dbReference>
<dbReference type="NCBIfam" id="NF002765">
    <property type="entry name" value="PRK02833.1-3"/>
    <property type="match status" value="1"/>
</dbReference>
<dbReference type="PANTHER" id="PTHR37819">
    <property type="entry name" value="PROTEIN PSIE"/>
    <property type="match status" value="1"/>
</dbReference>
<dbReference type="PANTHER" id="PTHR37819:SF1">
    <property type="entry name" value="PROTEIN PSIE"/>
    <property type="match status" value="1"/>
</dbReference>
<dbReference type="Pfam" id="PF06146">
    <property type="entry name" value="PsiE"/>
    <property type="match status" value="1"/>
</dbReference>
<dbReference type="PIRSF" id="PIRSF029598">
    <property type="entry name" value="PsiE"/>
    <property type="match status" value="1"/>
</dbReference>